<name>CCDC8_MOUSE</name>
<comment type="function">
    <text evidence="1">Core component of the 3M complex, a complex required to regulate microtubule dynamics and genome integrity. It is unclear how the 3M complex regulates microtubules, it could act by controlling the level of a microtubule stabilizer. Required for localization of CUL7 to the centrosome.</text>
</comment>
<comment type="subunit">
    <text evidence="1">Component of the 3M complex, composed of core components CUL7, CCDC8 and OBSL1. Interacts (via PxLPxI/L motif) with ANKRA2 (via ankyrin repeats); may link the 3M complex to histone deacetylases including HDAC4 and HDAC5.</text>
</comment>
<comment type="subcellular location">
    <subcellularLocation>
        <location evidence="1">Cytoplasm</location>
    </subcellularLocation>
    <subcellularLocation>
        <location evidence="1">Cytoplasm</location>
        <location evidence="1">Cytoskeleton</location>
        <location evidence="1">Microtubule organizing center</location>
        <location evidence="1">Centrosome</location>
    </subcellularLocation>
</comment>
<comment type="domain">
    <text evidence="1">The PxLPxI/L motif mediates interaction with ankyrin repeats of ANKRA2.</text>
</comment>
<comment type="miscellaneous">
    <text>Despite its name, does not contain a coiled coil domain.</text>
</comment>
<proteinExistence type="evidence at protein level"/>
<sequence>MLQIGEDVDYLLIPREVRLAGGVWRVISKPATKEAEFRERLIQFLQEEGRTLEDVARIIEKSTPHPPQPRKRTKELRVRRVPQMVTPPLRLVVGTYDSSNGSDSELSDFDTSKVKGNRSSSGRTRKVRKMPVSYLGSKFLGSDVESEDDQELVEAFLRRGEKPSAPPPRRRVNLPVPMFENNLGPQPSKADRWREYVSQVSWGKLKQRVKGWAPRSGSEVGQTQQASTAAERAGEMRHSQASSDDDSSRNTGDRSDQMLGTRRWKPKIKWVSLRRCRKEQVPPFAQGTGMPAEEHPEAAENQGAEAAANQRAEPLASPRAEAAASPRAETAADPRVEAVASPRAEAAASPRAEAVADPRAEAAASPRAEAAASPRTEAAASLRAEAVASPRAEAAASPRAEAAADPRAEAAASPIAEAAANQKAELVDSPRAETAADPRAEAAASPRAEAVADPRVEAAASPIAEAAANQKAELVDSPRAETAADPRAEAAASPRAEAAADPRAEVAASPRAEAAASPRAEAEASPRAEAAASPKAEAEANLRVEAAAYLRAGVPPDQRAEAIDSQRAEGPANQRTGATENQRVEVLADQRAGVLHDQREEAGPQGIQEASAGSGSRAQKQVKTVRFQTPGRFSWFRMRRRVFWHTPRLPTLPRRVPRAGEARSLRVLRADIRADVEHREQEEQL</sequence>
<organism>
    <name type="scientific">Mus musculus</name>
    <name type="common">Mouse</name>
    <dbReference type="NCBI Taxonomy" id="10090"/>
    <lineage>
        <taxon>Eukaryota</taxon>
        <taxon>Metazoa</taxon>
        <taxon>Chordata</taxon>
        <taxon>Craniata</taxon>
        <taxon>Vertebrata</taxon>
        <taxon>Euteleostomi</taxon>
        <taxon>Mammalia</taxon>
        <taxon>Eutheria</taxon>
        <taxon>Euarchontoglires</taxon>
        <taxon>Glires</taxon>
        <taxon>Rodentia</taxon>
        <taxon>Myomorpha</taxon>
        <taxon>Muroidea</taxon>
        <taxon>Muridae</taxon>
        <taxon>Murinae</taxon>
        <taxon>Mus</taxon>
        <taxon>Mus</taxon>
    </lineage>
</organism>
<dbReference type="EMBL" id="AC148976">
    <property type="status" value="NOT_ANNOTATED_CDS"/>
    <property type="molecule type" value="Genomic_DNA"/>
</dbReference>
<dbReference type="EMBL" id="CH466654">
    <property type="protein sequence ID" value="EDL42062.1"/>
    <property type="molecule type" value="Genomic_DNA"/>
</dbReference>
<dbReference type="CCDS" id="CCDS52044.1"/>
<dbReference type="RefSeq" id="NP_001095005.1">
    <property type="nucleotide sequence ID" value="NM_001101535.2"/>
</dbReference>
<dbReference type="BioGRID" id="241620">
    <property type="interactions" value="1"/>
</dbReference>
<dbReference type="FunCoup" id="D3YZV8">
    <property type="interactions" value="171"/>
</dbReference>
<dbReference type="STRING" id="10090.ENSMUSP00000092399"/>
<dbReference type="GlyGen" id="D3YZV8">
    <property type="glycosylation" value="1 site"/>
</dbReference>
<dbReference type="iPTMnet" id="D3YZV8"/>
<dbReference type="PhosphoSitePlus" id="D3YZV8"/>
<dbReference type="jPOST" id="D3YZV8"/>
<dbReference type="PaxDb" id="10090-ENSMUSP00000092399"/>
<dbReference type="PeptideAtlas" id="D3YZV8"/>
<dbReference type="ProteomicsDB" id="265606"/>
<dbReference type="Antibodypedia" id="31453">
    <property type="antibodies" value="146 antibodies from 22 providers"/>
</dbReference>
<dbReference type="Ensembl" id="ENSMUST00000094805.5">
    <property type="protein sequence ID" value="ENSMUSP00000092399.4"/>
    <property type="gene ID" value="ENSMUSG00000041117.10"/>
</dbReference>
<dbReference type="GeneID" id="434130"/>
<dbReference type="KEGG" id="mmu:434130"/>
<dbReference type="UCSC" id="uc012fak.1">
    <property type="organism name" value="mouse"/>
</dbReference>
<dbReference type="AGR" id="MGI:3612184"/>
<dbReference type="CTD" id="83987"/>
<dbReference type="MGI" id="MGI:3612184">
    <property type="gene designation" value="Ccdc8"/>
</dbReference>
<dbReference type="VEuPathDB" id="HostDB:ENSMUSG00000041117"/>
<dbReference type="eggNOG" id="ENOG502S9UD">
    <property type="taxonomic scope" value="Eukaryota"/>
</dbReference>
<dbReference type="GeneTree" id="ENSGT01030000234522"/>
<dbReference type="HOGENOM" id="CLU_025577_0_0_1"/>
<dbReference type="InParanoid" id="D3YZV8"/>
<dbReference type="OMA" id="NGGRWAS"/>
<dbReference type="OrthoDB" id="9633677at2759"/>
<dbReference type="PhylomeDB" id="D3YZV8"/>
<dbReference type="TreeFam" id="TF335054"/>
<dbReference type="BioGRID-ORCS" id="434130">
    <property type="hits" value="2 hits in 77 CRISPR screens"/>
</dbReference>
<dbReference type="ChiTaRS" id="Ccdc8">
    <property type="organism name" value="mouse"/>
</dbReference>
<dbReference type="PRO" id="PR:D3YZV8"/>
<dbReference type="Proteomes" id="UP000000589">
    <property type="component" value="Chromosome 7"/>
</dbReference>
<dbReference type="RNAct" id="D3YZV8">
    <property type="molecule type" value="protein"/>
</dbReference>
<dbReference type="Bgee" id="ENSMUSG00000041117">
    <property type="expression patterns" value="Expressed in humerus cartilage element and 133 other cell types or tissues"/>
</dbReference>
<dbReference type="GO" id="GO:1990393">
    <property type="term" value="C:3M complex"/>
    <property type="evidence" value="ECO:0000250"/>
    <property type="project" value="UniProtKB"/>
</dbReference>
<dbReference type="GO" id="GO:0005813">
    <property type="term" value="C:centrosome"/>
    <property type="evidence" value="ECO:0000250"/>
    <property type="project" value="UniProtKB"/>
</dbReference>
<dbReference type="GO" id="GO:0005737">
    <property type="term" value="C:cytoplasm"/>
    <property type="evidence" value="ECO:0000250"/>
    <property type="project" value="UniProtKB"/>
</dbReference>
<dbReference type="GO" id="GO:0000226">
    <property type="term" value="P:microtubule cytoskeleton organization"/>
    <property type="evidence" value="ECO:0000250"/>
    <property type="project" value="UniProtKB"/>
</dbReference>
<dbReference type="GO" id="GO:0007088">
    <property type="term" value="P:regulation of mitotic nuclear division"/>
    <property type="evidence" value="ECO:0000250"/>
    <property type="project" value="UniProtKB"/>
</dbReference>
<dbReference type="InterPro" id="IPR026526">
    <property type="entry name" value="Coiled-coil_p8"/>
</dbReference>
<dbReference type="PANTHER" id="PTHR47741">
    <property type="entry name" value="COILED COIL DOMAIN-CONTAINING PROTEIN 8, CCDC8"/>
    <property type="match status" value="1"/>
</dbReference>
<dbReference type="PANTHER" id="PTHR47741:SF1">
    <property type="entry name" value="COILED-COIL DOMAIN-CONTAINING PROTEIN 8"/>
    <property type="match status" value="1"/>
</dbReference>
<feature type="chain" id="PRO_0000415807" description="Coiled-coil domain-containing protein 8 homolog">
    <location>
        <begin position="1"/>
        <end position="685"/>
    </location>
</feature>
<feature type="region of interest" description="Disordered" evidence="2">
    <location>
        <begin position="93"/>
        <end position="127"/>
    </location>
</feature>
<feature type="region of interest" description="Disordered" evidence="2">
    <location>
        <begin position="207"/>
        <end position="263"/>
    </location>
</feature>
<feature type="region of interest" description="Disordered" evidence="2">
    <location>
        <begin position="281"/>
        <end position="538"/>
    </location>
</feature>
<feature type="region of interest" description="Disordered" evidence="2">
    <location>
        <begin position="558"/>
        <end position="579"/>
    </location>
</feature>
<feature type="region of interest" description="Disordered" evidence="2">
    <location>
        <begin position="599"/>
        <end position="623"/>
    </location>
</feature>
<feature type="short sequence motif" description="PxLPxI/L motif; mediates interaction with ANKRA2" evidence="1">
    <location>
        <begin position="647"/>
        <end position="653"/>
    </location>
</feature>
<feature type="compositionally biased region" description="Polar residues" evidence="2">
    <location>
        <begin position="219"/>
        <end position="228"/>
    </location>
</feature>
<feature type="compositionally biased region" description="Basic and acidic residues" evidence="2">
    <location>
        <begin position="246"/>
        <end position="256"/>
    </location>
</feature>
<feature type="compositionally biased region" description="Low complexity" evidence="2">
    <location>
        <begin position="299"/>
        <end position="329"/>
    </location>
</feature>
<feature type="compositionally biased region" description="Low complexity" evidence="2">
    <location>
        <begin position="337"/>
        <end position="353"/>
    </location>
</feature>
<feature type="compositionally biased region" description="Low complexity" evidence="2">
    <location>
        <begin position="361"/>
        <end position="401"/>
    </location>
</feature>
<feature type="compositionally biased region" description="Low complexity" evidence="2">
    <location>
        <begin position="409"/>
        <end position="420"/>
    </location>
</feature>
<feature type="compositionally biased region" description="Basic and acidic residues" evidence="2">
    <location>
        <begin position="425"/>
        <end position="440"/>
    </location>
</feature>
<feature type="compositionally biased region" description="Low complexity" evidence="2">
    <location>
        <begin position="458"/>
        <end position="468"/>
    </location>
</feature>
<feature type="compositionally biased region" description="Basic and acidic residues" evidence="2">
    <location>
        <begin position="473"/>
        <end position="488"/>
    </location>
</feature>
<feature type="compositionally biased region" description="Low complexity" evidence="2">
    <location>
        <begin position="505"/>
        <end position="519"/>
    </location>
</feature>
<feature type="compositionally biased region" description="Basic and acidic residues" evidence="2">
    <location>
        <begin position="558"/>
        <end position="567"/>
    </location>
</feature>
<feature type="compositionally biased region" description="Polar residues" evidence="2">
    <location>
        <begin position="611"/>
        <end position="622"/>
    </location>
</feature>
<feature type="modified residue" description="Phosphoserine" evidence="3">
    <location>
        <position position="142"/>
    </location>
</feature>
<feature type="modified residue" description="Phosphoserine" evidence="1">
    <location>
        <position position="146"/>
    </location>
</feature>
<protein>
    <recommendedName>
        <fullName>Coiled-coil domain-containing protein 8 homolog</fullName>
    </recommendedName>
</protein>
<accession>D3YZV8</accession>
<evidence type="ECO:0000250" key="1">
    <source>
        <dbReference type="UniProtKB" id="Q9H0W5"/>
    </source>
</evidence>
<evidence type="ECO:0000256" key="2">
    <source>
        <dbReference type="SAM" id="MobiDB-lite"/>
    </source>
</evidence>
<evidence type="ECO:0007744" key="3">
    <source>
    </source>
</evidence>
<reference key="1">
    <citation type="journal article" date="2009" name="PLoS Biol.">
        <title>Lineage-specific biology revealed by a finished genome assembly of the mouse.</title>
        <authorList>
            <person name="Church D.M."/>
            <person name="Goodstadt L."/>
            <person name="Hillier L.W."/>
            <person name="Zody M.C."/>
            <person name="Goldstein S."/>
            <person name="She X."/>
            <person name="Bult C.J."/>
            <person name="Agarwala R."/>
            <person name="Cherry J.L."/>
            <person name="DiCuccio M."/>
            <person name="Hlavina W."/>
            <person name="Kapustin Y."/>
            <person name="Meric P."/>
            <person name="Maglott D."/>
            <person name="Birtle Z."/>
            <person name="Marques A.C."/>
            <person name="Graves T."/>
            <person name="Zhou S."/>
            <person name="Teague B."/>
            <person name="Potamousis K."/>
            <person name="Churas C."/>
            <person name="Place M."/>
            <person name="Herschleb J."/>
            <person name="Runnheim R."/>
            <person name="Forrest D."/>
            <person name="Amos-Landgraf J."/>
            <person name="Schwartz D.C."/>
            <person name="Cheng Z."/>
            <person name="Lindblad-Toh K."/>
            <person name="Eichler E.E."/>
            <person name="Ponting C.P."/>
        </authorList>
    </citation>
    <scope>NUCLEOTIDE SEQUENCE [LARGE SCALE GENOMIC DNA]</scope>
    <source>
        <strain>C57BL/6J</strain>
    </source>
</reference>
<reference key="2">
    <citation type="submission" date="2005-09" db="EMBL/GenBank/DDBJ databases">
        <authorList>
            <person name="Mural R.J."/>
            <person name="Adams M.D."/>
            <person name="Myers E.W."/>
            <person name="Smith H.O."/>
            <person name="Venter J.C."/>
        </authorList>
    </citation>
    <scope>NUCLEOTIDE SEQUENCE [LARGE SCALE GENOMIC DNA]</scope>
</reference>
<reference key="3">
    <citation type="journal article" date="2010" name="Cell">
        <title>A tissue-specific atlas of mouse protein phosphorylation and expression.</title>
        <authorList>
            <person name="Huttlin E.L."/>
            <person name="Jedrychowski M.P."/>
            <person name="Elias J.E."/>
            <person name="Goswami T."/>
            <person name="Rad R."/>
            <person name="Beausoleil S.A."/>
            <person name="Villen J."/>
            <person name="Haas W."/>
            <person name="Sowa M.E."/>
            <person name="Gygi S.P."/>
        </authorList>
    </citation>
    <scope>PHOSPHORYLATION [LARGE SCALE ANALYSIS] AT SER-142</scope>
    <scope>IDENTIFICATION BY MASS SPECTROMETRY [LARGE SCALE ANALYSIS]</scope>
    <source>
        <tissue>Heart</tissue>
        <tissue>Lung</tissue>
        <tissue>Spleen</tissue>
    </source>
</reference>
<keyword id="KW-0963">Cytoplasm</keyword>
<keyword id="KW-0206">Cytoskeleton</keyword>
<keyword id="KW-0597">Phosphoprotein</keyword>
<keyword id="KW-1185">Reference proteome</keyword>
<gene>
    <name type="primary">Ccdc8</name>
</gene>